<comment type="function">
    <text evidence="1 2 3">Involved in the biosynthesis of highly unsaturated fatty acids (HUFA) from the essential polyunsaturated fatty acids (PUFA) linoleic acid (LA) (18:2n-6) and alpha-linolenic acid (ALA) (18:3n-3) precursors, acting as a fatty acyl-coenzyme A (CoA) desaturase that introduces a cis double bond at carbon 6 of the fatty acyl chain. Catalyzes the first and rate limiting step in this pathway which is the desaturation of LA (18:2n-6) and ALA (18:3n-3) into gamma-linoleate (GLA) (18:3n-6) and stearidonate (18:4n-3), respectively (By similarity). Subsequently, in the biosynthetic pathway of HUFA n-3 series, it desaturates tetracosapentaenoate (24:5n-3) to tetracosahexaenoate (24:6n-3), which is then converted to docosahexaenoate (DHA)(22:6n-3), an important lipid for nervous system function (By similarity). It can also desaturate (11E)-octadecenoate (trans-vaccenoate, a metabolite in the biohydrogenation pathway of LA and the predominant trans fatty acid in cow milk) at carbon 6 generating (6Z,11E)-octadecadienoate (By similarity). In addition to Delta-6 activity, this enzyme exhibits Delta-8 activity with slight biases toward n-3 fatty acyl-CoA substrates (By similarity).</text>
</comment>
<comment type="catalytic activity">
    <reaction evidence="2">
        <text>(9Z,12Z)-octadecadienoyl-CoA + 2 Fe(II)-[cytochrome b5] + O2 + 2 H(+) = (6Z,9Z,12Z)-octadecatrienoyl-CoA + 2 Fe(III)-[cytochrome b5] + 2 H2O</text>
        <dbReference type="Rhea" id="RHEA:47140"/>
        <dbReference type="Rhea" id="RHEA-COMP:10438"/>
        <dbReference type="Rhea" id="RHEA-COMP:10439"/>
        <dbReference type="ChEBI" id="CHEBI:15377"/>
        <dbReference type="ChEBI" id="CHEBI:15378"/>
        <dbReference type="ChEBI" id="CHEBI:15379"/>
        <dbReference type="ChEBI" id="CHEBI:29033"/>
        <dbReference type="ChEBI" id="CHEBI:29034"/>
        <dbReference type="ChEBI" id="CHEBI:57363"/>
        <dbReference type="ChEBI" id="CHEBI:57383"/>
        <dbReference type="EC" id="1.14.19.3"/>
    </reaction>
    <physiologicalReaction direction="left-to-right" evidence="2">
        <dbReference type="Rhea" id="RHEA:47141"/>
    </physiologicalReaction>
</comment>
<comment type="catalytic activity">
    <reaction evidence="2">
        <text>(9Z,12Z,15Z)-octadecatrienoyl-CoA + 2 Fe(II)-[cytochrome b5] + O2 + 2 H(+) = (6Z,9Z,12Z,15Z)-octadecatetraenoyl-CoA + 2 Fe(III)-[cytochrome b5] + 2 H2O</text>
        <dbReference type="Rhea" id="RHEA:47144"/>
        <dbReference type="Rhea" id="RHEA-COMP:10438"/>
        <dbReference type="Rhea" id="RHEA-COMP:10439"/>
        <dbReference type="ChEBI" id="CHEBI:15377"/>
        <dbReference type="ChEBI" id="CHEBI:15378"/>
        <dbReference type="ChEBI" id="CHEBI:15379"/>
        <dbReference type="ChEBI" id="CHEBI:29033"/>
        <dbReference type="ChEBI" id="CHEBI:29034"/>
        <dbReference type="ChEBI" id="CHEBI:71489"/>
        <dbReference type="ChEBI" id="CHEBI:74034"/>
        <dbReference type="EC" id="1.14.19.3"/>
    </reaction>
    <physiologicalReaction direction="left-to-right" evidence="2">
        <dbReference type="Rhea" id="RHEA:47145"/>
    </physiologicalReaction>
</comment>
<comment type="catalytic activity">
    <reaction evidence="3">
        <text>(9Z,12Z,15Z,18Z,21Z)-tetracosapentaenoyl-CoA + 2 Fe(II)-[cytochrome b5] + O2 + 2 H(+) = (6Z,9Z,12Z,15Z,18Z,21Z)-tetracosahexaenoyl-CoA + 2 Fe(III)-[cytochrome b5] + 2 H2O</text>
        <dbReference type="Rhea" id="RHEA:36999"/>
        <dbReference type="Rhea" id="RHEA-COMP:10438"/>
        <dbReference type="Rhea" id="RHEA-COMP:10439"/>
        <dbReference type="ChEBI" id="CHEBI:15377"/>
        <dbReference type="ChEBI" id="CHEBI:15378"/>
        <dbReference type="ChEBI" id="CHEBI:15379"/>
        <dbReference type="ChEBI" id="CHEBI:29033"/>
        <dbReference type="ChEBI" id="CHEBI:29034"/>
        <dbReference type="ChEBI" id="CHEBI:74083"/>
        <dbReference type="ChEBI" id="CHEBI:74086"/>
    </reaction>
    <physiologicalReaction direction="left-to-right" evidence="3">
        <dbReference type="Rhea" id="RHEA:37000"/>
    </physiologicalReaction>
</comment>
<comment type="catalytic activity">
    <reaction evidence="3">
        <text>(11E)-octadecenoyl-CoA + 2 Fe(II)-[cytochrome b5] + O2 + 2 H(+) = (6Z,11E)-octadecadienoyl-CoA + 2 Fe(III)-[cytochrome b5] + 2 H2O</text>
        <dbReference type="Rhea" id="RHEA:46064"/>
        <dbReference type="Rhea" id="RHEA-COMP:10438"/>
        <dbReference type="Rhea" id="RHEA-COMP:10439"/>
        <dbReference type="ChEBI" id="CHEBI:15377"/>
        <dbReference type="ChEBI" id="CHEBI:15378"/>
        <dbReference type="ChEBI" id="CHEBI:15379"/>
        <dbReference type="ChEBI" id="CHEBI:29033"/>
        <dbReference type="ChEBI" id="CHEBI:29034"/>
        <dbReference type="ChEBI" id="CHEBI:74296"/>
        <dbReference type="ChEBI" id="CHEBI:85652"/>
    </reaction>
    <physiologicalReaction direction="left-to-right" evidence="3">
        <dbReference type="Rhea" id="RHEA:46065"/>
    </physiologicalReaction>
</comment>
<comment type="catalytic activity">
    <reaction evidence="1">
        <text>(11Z,14Z)-eicosadienoyl-CoA + 2 Fe(II)-[cytochrome b5] + O2 + 2 H(+) = (8Z,11Z,14Z)-eicosatrienoyl-CoA + 2 Fe(III)-[cytochrome b5] + 2 H2O</text>
        <dbReference type="Rhea" id="RHEA:39567"/>
        <dbReference type="Rhea" id="RHEA-COMP:10438"/>
        <dbReference type="Rhea" id="RHEA-COMP:10439"/>
        <dbReference type="ChEBI" id="CHEBI:15377"/>
        <dbReference type="ChEBI" id="CHEBI:15378"/>
        <dbReference type="ChEBI" id="CHEBI:15379"/>
        <dbReference type="ChEBI" id="CHEBI:29033"/>
        <dbReference type="ChEBI" id="CHEBI:29034"/>
        <dbReference type="ChEBI" id="CHEBI:74264"/>
        <dbReference type="ChEBI" id="CHEBI:76410"/>
    </reaction>
    <physiologicalReaction direction="left-to-right" evidence="1">
        <dbReference type="Rhea" id="RHEA:39568"/>
    </physiologicalReaction>
</comment>
<comment type="catalytic activity">
    <reaction evidence="1">
        <text>(11Z,14Z,17Z)-eicosatrienoyl-CoA + 2 Fe(II)-[cytochrome b5] + O2 + 2 H(+) = (8Z,11Z,14Z,17Z)-eicosatetraenoyl-CoA + 2 Fe(III)-[cytochrome b5] + 2 H2O</text>
        <dbReference type="Rhea" id="RHEA:39571"/>
        <dbReference type="Rhea" id="RHEA-COMP:10438"/>
        <dbReference type="Rhea" id="RHEA-COMP:10439"/>
        <dbReference type="ChEBI" id="CHEBI:15377"/>
        <dbReference type="ChEBI" id="CHEBI:15378"/>
        <dbReference type="ChEBI" id="CHEBI:15379"/>
        <dbReference type="ChEBI" id="CHEBI:29033"/>
        <dbReference type="ChEBI" id="CHEBI:29034"/>
        <dbReference type="ChEBI" id="CHEBI:74265"/>
        <dbReference type="ChEBI" id="CHEBI:74328"/>
    </reaction>
    <physiologicalReaction direction="left-to-right" evidence="1">
        <dbReference type="Rhea" id="RHEA:39572"/>
    </physiologicalReaction>
</comment>
<comment type="pathway">
    <text evidence="2">Lipid metabolism; polyunsaturated fatty acid biosynthesis.</text>
</comment>
<comment type="subcellular location">
    <subcellularLocation>
        <location evidence="6">Endoplasmic reticulum membrane</location>
        <topology evidence="4">Multi-pass membrane protein</topology>
    </subcellularLocation>
</comment>
<comment type="domain">
    <text evidence="2">The protein sequence includes a number of characteristic features of microsomal fatty acid desaturases including the three histidine boxes HXXXH, HXXHH, and QXXHH (these domains may contain the active site and/or be involved in metal ion binding), and the N-terminal cytochrome b5 domain containing the heme-binding motif, HPGG, similar to that of other fatty acid desaturases.</text>
</comment>
<comment type="similarity">
    <text evidence="6">Belongs to the fatty acid desaturase type 1 family.</text>
</comment>
<accession>A4FV48</accession>
<proteinExistence type="evidence at transcript level"/>
<keyword id="KW-0249">Electron transport</keyword>
<keyword id="KW-0256">Endoplasmic reticulum</keyword>
<keyword id="KW-0275">Fatty acid biosynthesis</keyword>
<keyword id="KW-0276">Fatty acid metabolism</keyword>
<keyword id="KW-0444">Lipid biosynthesis</keyword>
<keyword id="KW-0443">Lipid metabolism</keyword>
<keyword id="KW-0472">Membrane</keyword>
<keyword id="KW-0560">Oxidoreductase</keyword>
<keyword id="KW-1185">Reference proteome</keyword>
<keyword id="KW-0812">Transmembrane</keyword>
<keyword id="KW-1133">Transmembrane helix</keyword>
<keyword id="KW-0813">Transport</keyword>
<organism>
    <name type="scientific">Bos taurus</name>
    <name type="common">Bovine</name>
    <dbReference type="NCBI Taxonomy" id="9913"/>
    <lineage>
        <taxon>Eukaryota</taxon>
        <taxon>Metazoa</taxon>
        <taxon>Chordata</taxon>
        <taxon>Craniata</taxon>
        <taxon>Vertebrata</taxon>
        <taxon>Euteleostomi</taxon>
        <taxon>Mammalia</taxon>
        <taxon>Eutheria</taxon>
        <taxon>Laurasiatheria</taxon>
        <taxon>Artiodactyla</taxon>
        <taxon>Ruminantia</taxon>
        <taxon>Pecora</taxon>
        <taxon>Bovidae</taxon>
        <taxon>Bovinae</taxon>
        <taxon>Bos</taxon>
    </lineage>
</organism>
<dbReference type="EC" id="1.14.19.3" evidence="2"/>
<dbReference type="EMBL" id="BC123735">
    <property type="protein sequence ID" value="AAI23736.1"/>
    <property type="molecule type" value="mRNA"/>
</dbReference>
<dbReference type="RefSeq" id="NP_001076913.1">
    <property type="nucleotide sequence ID" value="NM_001083444.1"/>
</dbReference>
<dbReference type="SMR" id="A4FV48"/>
<dbReference type="FunCoup" id="A4FV48">
    <property type="interactions" value="639"/>
</dbReference>
<dbReference type="STRING" id="9913.ENSBTAP00000020610"/>
<dbReference type="PaxDb" id="9913-ENSBTAP00000020610"/>
<dbReference type="Ensembl" id="ENSBTAT00000020610.7">
    <property type="protein sequence ID" value="ENSBTAP00000020610.5"/>
    <property type="gene ID" value="ENSBTAG00000015505.7"/>
</dbReference>
<dbReference type="GeneID" id="521822"/>
<dbReference type="KEGG" id="bta:521822"/>
<dbReference type="CTD" id="9415"/>
<dbReference type="VEuPathDB" id="HostDB:ENSBTAG00000015505"/>
<dbReference type="VGNC" id="VGNC:28702">
    <property type="gene designation" value="FADS2"/>
</dbReference>
<dbReference type="eggNOG" id="KOG4232">
    <property type="taxonomic scope" value="Eukaryota"/>
</dbReference>
<dbReference type="GeneTree" id="ENSGT00950000182990"/>
<dbReference type="HOGENOM" id="CLU_016265_0_1_1"/>
<dbReference type="InParanoid" id="A4FV48"/>
<dbReference type="OMA" id="QWWKNKH"/>
<dbReference type="OrthoDB" id="260091at2759"/>
<dbReference type="TreeFam" id="TF313604"/>
<dbReference type="Reactome" id="R-BTA-2046105">
    <property type="pathway name" value="Linoleic acid (LA) metabolism"/>
</dbReference>
<dbReference type="Reactome" id="R-BTA-2046106">
    <property type="pathway name" value="alpha-linolenic acid (ALA) metabolism"/>
</dbReference>
<dbReference type="UniPathway" id="UPA00658"/>
<dbReference type="Proteomes" id="UP000009136">
    <property type="component" value="Chromosome 29"/>
</dbReference>
<dbReference type="GO" id="GO:0005789">
    <property type="term" value="C:endoplasmic reticulum membrane"/>
    <property type="evidence" value="ECO:0007669"/>
    <property type="project" value="UniProtKB-SubCell"/>
</dbReference>
<dbReference type="GO" id="GO:0016213">
    <property type="term" value="F:acyl-CoA 6-desaturase activity"/>
    <property type="evidence" value="ECO:0007669"/>
    <property type="project" value="UniProtKB-EC"/>
</dbReference>
<dbReference type="GO" id="GO:0016717">
    <property type="term" value="F:oxidoreductase activity, acting on paired donors, with oxidation of a pair of donors resulting in the reduction of molecular oxygen to two molecules of water"/>
    <property type="evidence" value="ECO:0000318"/>
    <property type="project" value="GO_Central"/>
</dbReference>
<dbReference type="GO" id="GO:0004768">
    <property type="term" value="F:stearoyl-CoA 9-desaturase activity"/>
    <property type="evidence" value="ECO:0007669"/>
    <property type="project" value="Ensembl"/>
</dbReference>
<dbReference type="GO" id="GO:0036109">
    <property type="term" value="P:alpha-linolenic acid metabolic process"/>
    <property type="evidence" value="ECO:0007669"/>
    <property type="project" value="Ensembl"/>
</dbReference>
<dbReference type="GO" id="GO:1901570">
    <property type="term" value="P:fatty acid derivative biosynthetic process"/>
    <property type="evidence" value="ECO:0007669"/>
    <property type="project" value="Ensembl"/>
</dbReference>
<dbReference type="GO" id="GO:0043651">
    <property type="term" value="P:linoleic acid metabolic process"/>
    <property type="evidence" value="ECO:0007669"/>
    <property type="project" value="Ensembl"/>
</dbReference>
<dbReference type="GO" id="GO:0006629">
    <property type="term" value="P:lipid metabolic process"/>
    <property type="evidence" value="ECO:0000318"/>
    <property type="project" value="GO_Central"/>
</dbReference>
<dbReference type="GO" id="GO:0042759">
    <property type="term" value="P:long-chain fatty acid biosynthetic process"/>
    <property type="evidence" value="ECO:0007669"/>
    <property type="project" value="Ensembl"/>
</dbReference>
<dbReference type="GO" id="GO:0006636">
    <property type="term" value="P:unsaturated fatty acid biosynthetic process"/>
    <property type="evidence" value="ECO:0007669"/>
    <property type="project" value="UniProtKB-UniPathway"/>
</dbReference>
<dbReference type="CDD" id="cd03506">
    <property type="entry name" value="Delta6-FADS-like"/>
    <property type="match status" value="1"/>
</dbReference>
<dbReference type="FunFam" id="3.10.120.10:FF:000010">
    <property type="entry name" value="Delta-6 fatty acyl desaturase"/>
    <property type="match status" value="1"/>
</dbReference>
<dbReference type="Gene3D" id="3.10.120.10">
    <property type="entry name" value="Cytochrome b5-like heme/steroid binding domain"/>
    <property type="match status" value="1"/>
</dbReference>
<dbReference type="InterPro" id="IPR001199">
    <property type="entry name" value="Cyt_B5-like_heme/steroid-bd"/>
</dbReference>
<dbReference type="InterPro" id="IPR036400">
    <property type="entry name" value="Cyt_B5-like_heme/steroid_sf"/>
</dbReference>
<dbReference type="InterPro" id="IPR005804">
    <property type="entry name" value="FA_desaturase_dom"/>
</dbReference>
<dbReference type="InterPro" id="IPR012171">
    <property type="entry name" value="Fatty_acid_desaturase"/>
</dbReference>
<dbReference type="PANTHER" id="PTHR19353:SF12">
    <property type="entry name" value="ACYL-COA 6-DESATURASE"/>
    <property type="match status" value="1"/>
</dbReference>
<dbReference type="PANTHER" id="PTHR19353">
    <property type="entry name" value="FATTY ACID DESATURASE 2"/>
    <property type="match status" value="1"/>
</dbReference>
<dbReference type="Pfam" id="PF00173">
    <property type="entry name" value="Cyt-b5"/>
    <property type="match status" value="1"/>
</dbReference>
<dbReference type="Pfam" id="PF00487">
    <property type="entry name" value="FA_desaturase"/>
    <property type="match status" value="1"/>
</dbReference>
<dbReference type="PIRSF" id="PIRSF015921">
    <property type="entry name" value="FA_sphinglp_des"/>
    <property type="match status" value="1"/>
</dbReference>
<dbReference type="SMART" id="SM01117">
    <property type="entry name" value="Cyt-b5"/>
    <property type="match status" value="1"/>
</dbReference>
<dbReference type="SUPFAM" id="SSF55856">
    <property type="entry name" value="Cytochrome b5-like heme/steroid binding domain"/>
    <property type="match status" value="1"/>
</dbReference>
<dbReference type="PROSITE" id="PS50255">
    <property type="entry name" value="CYTOCHROME_B5_2"/>
    <property type="match status" value="1"/>
</dbReference>
<evidence type="ECO:0000250" key="1">
    <source>
        <dbReference type="UniProtKB" id="B8R1K0"/>
    </source>
</evidence>
<evidence type="ECO:0000250" key="2">
    <source>
        <dbReference type="UniProtKB" id="O95864"/>
    </source>
</evidence>
<evidence type="ECO:0000250" key="3">
    <source>
        <dbReference type="UniProtKB" id="Q9Z122"/>
    </source>
</evidence>
<evidence type="ECO:0000255" key="4"/>
<evidence type="ECO:0000255" key="5">
    <source>
        <dbReference type="PROSITE-ProRule" id="PRU00279"/>
    </source>
</evidence>
<evidence type="ECO:0000305" key="6"/>
<reference key="1">
    <citation type="submission" date="2006-09" db="EMBL/GenBank/DDBJ databases">
        <authorList>
            <consortium name="NIH - Mammalian Gene Collection (MGC) project"/>
        </authorList>
    </citation>
    <scope>NUCLEOTIDE SEQUENCE [LARGE SCALE MRNA]</scope>
    <source>
        <strain>Hereford</strain>
        <tissue>Hippocampus</tissue>
    </source>
</reference>
<feature type="chain" id="PRO_0000307100" description="Acyl-CoA 6-desaturase">
    <location>
        <begin position="1"/>
        <end position="444"/>
    </location>
</feature>
<feature type="topological domain" description="Cytoplasmic" evidence="6">
    <location>
        <begin position="1"/>
        <end position="122"/>
    </location>
</feature>
<feature type="transmembrane region" description="Helical" evidence="4">
    <location>
        <begin position="123"/>
        <end position="143"/>
    </location>
</feature>
<feature type="topological domain" description="Lumenal" evidence="6">
    <location>
        <begin position="144"/>
        <end position="147"/>
    </location>
</feature>
<feature type="transmembrane region" description="Helical" evidence="4">
    <location>
        <begin position="148"/>
        <end position="168"/>
    </location>
</feature>
<feature type="topological domain" description="Cytoplasmic" evidence="6">
    <location>
        <begin position="169"/>
        <end position="264"/>
    </location>
</feature>
<feature type="transmembrane region" description="Helical" evidence="4">
    <location>
        <begin position="265"/>
        <end position="285"/>
    </location>
</feature>
<feature type="topological domain" description="Lumenal" evidence="6">
    <location>
        <begin position="286"/>
        <end position="305"/>
    </location>
</feature>
<feature type="transmembrane region" description="Helical" evidence="4">
    <location>
        <begin position="306"/>
        <end position="326"/>
    </location>
</feature>
<feature type="topological domain" description="Cytoplasmic" evidence="6">
    <location>
        <begin position="327"/>
        <end position="444"/>
    </location>
</feature>
<feature type="domain" description="Cytochrome b5 heme-binding" evidence="5">
    <location>
        <begin position="18"/>
        <end position="95"/>
    </location>
</feature>
<feature type="short sequence motif" description="Histidine box-1">
    <location>
        <begin position="180"/>
        <end position="184"/>
    </location>
</feature>
<feature type="short sequence motif" description="Histidine box-2">
    <location>
        <begin position="217"/>
        <end position="221"/>
    </location>
</feature>
<feature type="short sequence motif" description="Histidine box-3">
    <location>
        <begin position="382"/>
        <end position="386"/>
    </location>
</feature>
<name>FADS2_BOVIN</name>
<gene>
    <name type="primary">FADS2</name>
</gene>
<sequence length="444" mass="52533">MGKGGNQDEGATELEAPMPTFRWEEIQKHNLRTDKWLVIDRKVYNITKWSSRHPGGQRVIGHYAGEDATDAFLAFHRNLDFVRKFMKPLLIGELAPEEPSQDRGKNSQITEDFRALRKTAEDMNLFKSNQLFFLLHLAHIIAMESIAWFTLFYFGNGWIPTIITAFVLATSQAQAGWLQHDYGHLSVYKKSMWNHIVHKFVIGHLKGASANWWNHRHFQHHAKPNIFHKDPDVNMLHVFVLGEWQPIEYGKKKLKYLPYNHQHEYFFLIGPPLLIPLYFQYQIIMTMIVRKYWADLAWAISYYTRFFITYIPFYGVLGSILFLNFIRFLESHWFVWVTQMNHIVMEIDREPYRDWFSSQLAATCNVEQSFFNDWFSGHLNFQIEHHLFPTMPRHNLHKIAPLVRSLCAKHGIEYQEKPLLRALQDIIGSLRKSGQLWLDAYLHK</sequence>
<protein>
    <recommendedName>
        <fullName>Acyl-CoA 6-desaturase</fullName>
        <ecNumber evidence="2">1.14.19.3</ecNumber>
    </recommendedName>
    <alternativeName>
        <fullName>Delta(6) fatty acid desaturase</fullName>
        <shortName>D6D</shortName>
        <shortName>Delta(6) desaturase</shortName>
        <shortName evidence="2">Delta-6 desaturase</shortName>
    </alternativeName>
    <alternativeName>
        <fullName evidence="2">Fatty acid desaturase 2</fullName>
    </alternativeName>
</protein>